<comment type="function">
    <text evidence="1">Part of the Tol-Pal system, which plays a role in outer membrane invagination during cell division and is important for maintaining outer membrane integrity.</text>
</comment>
<comment type="subunit">
    <text evidence="1">The Tol-Pal system is composed of five core proteins: the inner membrane proteins TolA, TolQ and TolR, the periplasmic protein TolB and the outer membrane protein Pal. They form a network linking the inner and outer membranes and the peptidoglycan layer.</text>
</comment>
<comment type="subcellular location">
    <subcellularLocation>
        <location evidence="1">Periplasm</location>
    </subcellularLocation>
</comment>
<comment type="similarity">
    <text evidence="1">Belongs to the TolB family.</text>
</comment>
<gene>
    <name evidence="1" type="primary">tolB</name>
    <name type="ordered locus">A2cp1_0694</name>
</gene>
<proteinExistence type="inferred from homology"/>
<reference key="1">
    <citation type="submission" date="2009-01" db="EMBL/GenBank/DDBJ databases">
        <title>Complete sequence of Anaeromyxobacter dehalogenans 2CP-1.</title>
        <authorList>
            <person name="Lucas S."/>
            <person name="Copeland A."/>
            <person name="Lapidus A."/>
            <person name="Glavina del Rio T."/>
            <person name="Dalin E."/>
            <person name="Tice H."/>
            <person name="Bruce D."/>
            <person name="Goodwin L."/>
            <person name="Pitluck S."/>
            <person name="Saunders E."/>
            <person name="Brettin T."/>
            <person name="Detter J.C."/>
            <person name="Han C."/>
            <person name="Larimer F."/>
            <person name="Land M."/>
            <person name="Hauser L."/>
            <person name="Kyrpides N."/>
            <person name="Ovchinnikova G."/>
            <person name="Beliaev A.S."/>
            <person name="Richardson P."/>
        </authorList>
    </citation>
    <scope>NUCLEOTIDE SEQUENCE [LARGE SCALE GENOMIC DNA]</scope>
    <source>
        <strain>2CP-1 / ATCC BAA-258</strain>
    </source>
</reference>
<organism>
    <name type="scientific">Anaeromyxobacter dehalogenans (strain 2CP-1 / ATCC BAA-258)</name>
    <dbReference type="NCBI Taxonomy" id="455488"/>
    <lineage>
        <taxon>Bacteria</taxon>
        <taxon>Pseudomonadati</taxon>
        <taxon>Myxococcota</taxon>
        <taxon>Myxococcia</taxon>
        <taxon>Myxococcales</taxon>
        <taxon>Cystobacterineae</taxon>
        <taxon>Anaeromyxobacteraceae</taxon>
        <taxon>Anaeromyxobacter</taxon>
    </lineage>
</organism>
<evidence type="ECO:0000255" key="1">
    <source>
        <dbReference type="HAMAP-Rule" id="MF_00671"/>
    </source>
</evidence>
<evidence type="ECO:0000256" key="2">
    <source>
        <dbReference type="SAM" id="MobiDB-lite"/>
    </source>
</evidence>
<dbReference type="EMBL" id="CP001359">
    <property type="protein sequence ID" value="ACL64049.1"/>
    <property type="molecule type" value="Genomic_DNA"/>
</dbReference>
<dbReference type="RefSeq" id="WP_012632085.1">
    <property type="nucleotide sequence ID" value="NC_011891.1"/>
</dbReference>
<dbReference type="SMR" id="B8JD21"/>
<dbReference type="KEGG" id="acp:A2cp1_0694"/>
<dbReference type="HOGENOM" id="CLU_047123_2_0_7"/>
<dbReference type="Proteomes" id="UP000007089">
    <property type="component" value="Chromosome"/>
</dbReference>
<dbReference type="GO" id="GO:0042597">
    <property type="term" value="C:periplasmic space"/>
    <property type="evidence" value="ECO:0007669"/>
    <property type="project" value="UniProtKB-SubCell"/>
</dbReference>
<dbReference type="GO" id="GO:0051301">
    <property type="term" value="P:cell division"/>
    <property type="evidence" value="ECO:0007669"/>
    <property type="project" value="UniProtKB-KW"/>
</dbReference>
<dbReference type="GO" id="GO:0017038">
    <property type="term" value="P:protein import"/>
    <property type="evidence" value="ECO:0007669"/>
    <property type="project" value="InterPro"/>
</dbReference>
<dbReference type="Gene3D" id="2.120.10.30">
    <property type="entry name" value="TolB, C-terminal domain"/>
    <property type="match status" value="1"/>
</dbReference>
<dbReference type="Gene3D" id="3.40.50.10070">
    <property type="entry name" value="TolB, N-terminal domain"/>
    <property type="match status" value="1"/>
</dbReference>
<dbReference type="HAMAP" id="MF_00671">
    <property type="entry name" value="TolB"/>
    <property type="match status" value="1"/>
</dbReference>
<dbReference type="InterPro" id="IPR011042">
    <property type="entry name" value="6-blade_b-propeller_TolB-like"/>
</dbReference>
<dbReference type="InterPro" id="IPR011659">
    <property type="entry name" value="PD40"/>
</dbReference>
<dbReference type="InterPro" id="IPR014167">
    <property type="entry name" value="Tol-Pal_TolB"/>
</dbReference>
<dbReference type="InterPro" id="IPR007195">
    <property type="entry name" value="TolB_N"/>
</dbReference>
<dbReference type="NCBIfam" id="TIGR02800">
    <property type="entry name" value="propeller_TolB"/>
    <property type="match status" value="1"/>
</dbReference>
<dbReference type="PANTHER" id="PTHR36842:SF1">
    <property type="entry name" value="PROTEIN TOLB"/>
    <property type="match status" value="1"/>
</dbReference>
<dbReference type="PANTHER" id="PTHR36842">
    <property type="entry name" value="PROTEIN TOLB HOMOLOG"/>
    <property type="match status" value="1"/>
</dbReference>
<dbReference type="Pfam" id="PF07676">
    <property type="entry name" value="PD40"/>
    <property type="match status" value="4"/>
</dbReference>
<dbReference type="Pfam" id="PF04052">
    <property type="entry name" value="TolB_N"/>
    <property type="match status" value="1"/>
</dbReference>
<dbReference type="SUPFAM" id="SSF52964">
    <property type="entry name" value="TolB, N-terminal domain"/>
    <property type="match status" value="1"/>
</dbReference>
<dbReference type="SUPFAM" id="SSF69304">
    <property type="entry name" value="Tricorn protease N-terminal domain"/>
    <property type="match status" value="1"/>
</dbReference>
<accession>B8JD21</accession>
<sequence>MTVRRALALAALALAVSPALAAQERPTIVVGSPDFRPLPIAVAAFQGEGDAGAAATQTAEVVRADLVLSGLFDVLDPRGFLADPSEGFAAPSIRFARWADVGADGLAKARVRRGPAGLEGELHLYEVRAGREVLVKLLRVDGADARSLAHRMADEIVRYYTREPGIFATRIAAIRRGRGTWELVTQDMDGGNQQVLLSERSILMSPAWRPDGREILVTSYRSGRPELWAYRFSDRAFRPLGRHRNAFGGVYSPDGSRIAFTVSEGNVTDLWVMSADGAGARKLTSDPAIDVSPTWSPDGRRIAFVSDRSGTPQIYVMGADGSGARRLTFQGNYNQTPQWSPRGDLIAFTARDERKVFDVFVVSPDSGAINRITQDQGRTNEEPSWAPNGRLMIFRTDRNGGIQLVVSDARGDRQTPVTSGKTDLAAPAWGPLAP</sequence>
<name>TOLB_ANAD2</name>
<keyword id="KW-0131">Cell cycle</keyword>
<keyword id="KW-0132">Cell division</keyword>
<keyword id="KW-0574">Periplasm</keyword>
<keyword id="KW-0732">Signal</keyword>
<feature type="signal peptide" evidence="1">
    <location>
        <begin position="1"/>
        <end position="21"/>
    </location>
</feature>
<feature type="chain" id="PRO_5000432917" description="Tol-Pal system protein TolB" evidence="1">
    <location>
        <begin position="22"/>
        <end position="434"/>
    </location>
</feature>
<feature type="region of interest" description="Disordered" evidence="2">
    <location>
        <begin position="411"/>
        <end position="434"/>
    </location>
</feature>
<protein>
    <recommendedName>
        <fullName evidence="1">Tol-Pal system protein TolB</fullName>
    </recommendedName>
</protein>